<evidence type="ECO:0000255" key="1">
    <source>
        <dbReference type="HAMAP-Rule" id="MF_00110"/>
    </source>
</evidence>
<name>AROB_OPITP</name>
<reference key="1">
    <citation type="journal article" date="2011" name="J. Bacteriol.">
        <title>Genome sequence of the verrucomicrobium Opitutus terrae PB90-1, an abundant inhabitant of rice paddy soil ecosystems.</title>
        <authorList>
            <person name="van Passel M.W."/>
            <person name="Kant R."/>
            <person name="Palva A."/>
            <person name="Copeland A."/>
            <person name="Lucas S."/>
            <person name="Lapidus A."/>
            <person name="Glavina del Rio T."/>
            <person name="Pitluck S."/>
            <person name="Goltsman E."/>
            <person name="Clum A."/>
            <person name="Sun H."/>
            <person name="Schmutz J."/>
            <person name="Larimer F.W."/>
            <person name="Land M.L."/>
            <person name="Hauser L."/>
            <person name="Kyrpides N."/>
            <person name="Mikhailova N."/>
            <person name="Richardson P.P."/>
            <person name="Janssen P.H."/>
            <person name="de Vos W.M."/>
            <person name="Smidt H."/>
        </authorList>
    </citation>
    <scope>NUCLEOTIDE SEQUENCE [LARGE SCALE GENOMIC DNA]</scope>
    <source>
        <strain>DSM 11246 / JCM 15787 / PB90-1</strain>
    </source>
</reference>
<organism>
    <name type="scientific">Opitutus terrae (strain DSM 11246 / JCM 15787 / PB90-1)</name>
    <dbReference type="NCBI Taxonomy" id="452637"/>
    <lineage>
        <taxon>Bacteria</taxon>
        <taxon>Pseudomonadati</taxon>
        <taxon>Verrucomicrobiota</taxon>
        <taxon>Opitutia</taxon>
        <taxon>Opitutales</taxon>
        <taxon>Opitutaceae</taxon>
        <taxon>Opitutus</taxon>
    </lineage>
</organism>
<keyword id="KW-0028">Amino-acid biosynthesis</keyword>
<keyword id="KW-0057">Aromatic amino acid biosynthesis</keyword>
<keyword id="KW-0170">Cobalt</keyword>
<keyword id="KW-0963">Cytoplasm</keyword>
<keyword id="KW-0456">Lyase</keyword>
<keyword id="KW-0479">Metal-binding</keyword>
<keyword id="KW-0520">NAD</keyword>
<keyword id="KW-0547">Nucleotide-binding</keyword>
<keyword id="KW-1185">Reference proteome</keyword>
<keyword id="KW-0862">Zinc</keyword>
<accession>B1ZQS6</accession>
<gene>
    <name evidence="1" type="primary">aroB</name>
    <name type="ordered locus">Oter_4556</name>
</gene>
<sequence>MPNTLTVDLGHRSYPIVFAADVRNNVRDQVAELTTAGRKVAVFTDEQVASAQVGALEAMFGSSPRLAFAPGESAKSLASFGRAMDFLAAQKVDRRGVVFAFGGGVIGDLAGFIAASWLRGIDFYQVPTTLLAMVDSSVGGKTGINIPAGKNLVGAFHQPRGVFIGTDFLRTLPAREFAAGMAEVIKYGLLGDAALLELLERAPLSFVSPELAGVIRQCCALKAAFVQADERELAPEGGRALLNLGHTFGHAIEQVTGYGVYLHGEAVAIGMCAAARLSAKLGHLGGADVARVDAVVAAHRLPVKLRTPLVLMDLLAAMARDKKVRAGMPRFVVLRKLGEAVTQDDVPAELAAECFREVGAS</sequence>
<comment type="function">
    <text evidence="1">Catalyzes the conversion of 3-deoxy-D-arabino-heptulosonate 7-phosphate (DAHP) to dehydroquinate (DHQ).</text>
</comment>
<comment type="catalytic activity">
    <reaction evidence="1">
        <text>7-phospho-2-dehydro-3-deoxy-D-arabino-heptonate = 3-dehydroquinate + phosphate</text>
        <dbReference type="Rhea" id="RHEA:21968"/>
        <dbReference type="ChEBI" id="CHEBI:32364"/>
        <dbReference type="ChEBI" id="CHEBI:43474"/>
        <dbReference type="ChEBI" id="CHEBI:58394"/>
        <dbReference type="EC" id="4.2.3.4"/>
    </reaction>
</comment>
<comment type="cofactor">
    <cofactor evidence="1">
        <name>Co(2+)</name>
        <dbReference type="ChEBI" id="CHEBI:48828"/>
    </cofactor>
    <cofactor evidence="1">
        <name>Zn(2+)</name>
        <dbReference type="ChEBI" id="CHEBI:29105"/>
    </cofactor>
    <text evidence="1">Binds 1 divalent metal cation per subunit. Can use either Co(2+) or Zn(2+).</text>
</comment>
<comment type="cofactor">
    <cofactor evidence="1">
        <name>NAD(+)</name>
        <dbReference type="ChEBI" id="CHEBI:57540"/>
    </cofactor>
</comment>
<comment type="pathway">
    <text evidence="1">Metabolic intermediate biosynthesis; chorismate biosynthesis; chorismate from D-erythrose 4-phosphate and phosphoenolpyruvate: step 2/7.</text>
</comment>
<comment type="subcellular location">
    <subcellularLocation>
        <location evidence="1">Cytoplasm</location>
    </subcellularLocation>
</comment>
<comment type="similarity">
    <text evidence="1">Belongs to the sugar phosphate cyclases superfamily. Dehydroquinate synthase family.</text>
</comment>
<dbReference type="EC" id="4.2.3.4" evidence="1"/>
<dbReference type="EMBL" id="CP001032">
    <property type="protein sequence ID" value="ACB77827.1"/>
    <property type="molecule type" value="Genomic_DNA"/>
</dbReference>
<dbReference type="SMR" id="B1ZQS6"/>
<dbReference type="STRING" id="452637.Oter_4556"/>
<dbReference type="KEGG" id="ote:Oter_4556"/>
<dbReference type="eggNOG" id="COG0337">
    <property type="taxonomic scope" value="Bacteria"/>
</dbReference>
<dbReference type="HOGENOM" id="CLU_001201_0_2_0"/>
<dbReference type="OrthoDB" id="9806583at2"/>
<dbReference type="UniPathway" id="UPA00053">
    <property type="reaction ID" value="UER00085"/>
</dbReference>
<dbReference type="Proteomes" id="UP000007013">
    <property type="component" value="Chromosome"/>
</dbReference>
<dbReference type="GO" id="GO:0005737">
    <property type="term" value="C:cytoplasm"/>
    <property type="evidence" value="ECO:0007669"/>
    <property type="project" value="UniProtKB-SubCell"/>
</dbReference>
<dbReference type="GO" id="GO:0003856">
    <property type="term" value="F:3-dehydroquinate synthase activity"/>
    <property type="evidence" value="ECO:0007669"/>
    <property type="project" value="UniProtKB-UniRule"/>
</dbReference>
<dbReference type="GO" id="GO:0046872">
    <property type="term" value="F:metal ion binding"/>
    <property type="evidence" value="ECO:0007669"/>
    <property type="project" value="UniProtKB-KW"/>
</dbReference>
<dbReference type="GO" id="GO:0000166">
    <property type="term" value="F:nucleotide binding"/>
    <property type="evidence" value="ECO:0007669"/>
    <property type="project" value="UniProtKB-KW"/>
</dbReference>
<dbReference type="GO" id="GO:0008652">
    <property type="term" value="P:amino acid biosynthetic process"/>
    <property type="evidence" value="ECO:0007669"/>
    <property type="project" value="UniProtKB-KW"/>
</dbReference>
<dbReference type="GO" id="GO:0009073">
    <property type="term" value="P:aromatic amino acid family biosynthetic process"/>
    <property type="evidence" value="ECO:0007669"/>
    <property type="project" value="UniProtKB-KW"/>
</dbReference>
<dbReference type="GO" id="GO:0009423">
    <property type="term" value="P:chorismate biosynthetic process"/>
    <property type="evidence" value="ECO:0007669"/>
    <property type="project" value="UniProtKB-UniRule"/>
</dbReference>
<dbReference type="CDD" id="cd08195">
    <property type="entry name" value="DHQS"/>
    <property type="match status" value="1"/>
</dbReference>
<dbReference type="FunFam" id="3.40.50.1970:FF:000007">
    <property type="entry name" value="Pentafunctional AROM polypeptide"/>
    <property type="match status" value="1"/>
</dbReference>
<dbReference type="Gene3D" id="3.40.50.1970">
    <property type="match status" value="1"/>
</dbReference>
<dbReference type="Gene3D" id="1.20.1090.10">
    <property type="entry name" value="Dehydroquinate synthase-like - alpha domain"/>
    <property type="match status" value="1"/>
</dbReference>
<dbReference type="HAMAP" id="MF_00110">
    <property type="entry name" value="DHQ_synthase"/>
    <property type="match status" value="1"/>
</dbReference>
<dbReference type="InterPro" id="IPR050071">
    <property type="entry name" value="Dehydroquinate_synthase"/>
</dbReference>
<dbReference type="InterPro" id="IPR016037">
    <property type="entry name" value="DHQ_synth_AroB"/>
</dbReference>
<dbReference type="InterPro" id="IPR030963">
    <property type="entry name" value="DHQ_synth_fam"/>
</dbReference>
<dbReference type="InterPro" id="IPR030960">
    <property type="entry name" value="DHQS/DOIS_N"/>
</dbReference>
<dbReference type="InterPro" id="IPR056179">
    <property type="entry name" value="DHQS_C"/>
</dbReference>
<dbReference type="NCBIfam" id="TIGR01357">
    <property type="entry name" value="aroB"/>
    <property type="match status" value="1"/>
</dbReference>
<dbReference type="PANTHER" id="PTHR43622">
    <property type="entry name" value="3-DEHYDROQUINATE SYNTHASE"/>
    <property type="match status" value="1"/>
</dbReference>
<dbReference type="PANTHER" id="PTHR43622:SF7">
    <property type="entry name" value="3-DEHYDROQUINATE SYNTHASE, CHLOROPLASTIC"/>
    <property type="match status" value="1"/>
</dbReference>
<dbReference type="Pfam" id="PF01761">
    <property type="entry name" value="DHQ_synthase"/>
    <property type="match status" value="1"/>
</dbReference>
<dbReference type="Pfam" id="PF24621">
    <property type="entry name" value="DHQS_C"/>
    <property type="match status" value="1"/>
</dbReference>
<dbReference type="PIRSF" id="PIRSF001455">
    <property type="entry name" value="DHQ_synth"/>
    <property type="match status" value="1"/>
</dbReference>
<dbReference type="SUPFAM" id="SSF56796">
    <property type="entry name" value="Dehydroquinate synthase-like"/>
    <property type="match status" value="1"/>
</dbReference>
<proteinExistence type="inferred from homology"/>
<protein>
    <recommendedName>
        <fullName evidence="1">3-dehydroquinate synthase</fullName>
        <shortName evidence="1">DHQS</shortName>
        <ecNumber evidence="1">4.2.3.4</ecNumber>
    </recommendedName>
</protein>
<feature type="chain" id="PRO_1000094558" description="3-dehydroquinate synthase">
    <location>
        <begin position="1"/>
        <end position="361"/>
    </location>
</feature>
<feature type="binding site" evidence="1">
    <location>
        <begin position="104"/>
        <end position="108"/>
    </location>
    <ligand>
        <name>NAD(+)</name>
        <dbReference type="ChEBI" id="CHEBI:57540"/>
    </ligand>
</feature>
<feature type="binding site" evidence="1">
    <location>
        <begin position="128"/>
        <end position="129"/>
    </location>
    <ligand>
        <name>NAD(+)</name>
        <dbReference type="ChEBI" id="CHEBI:57540"/>
    </ligand>
</feature>
<feature type="binding site" evidence="1">
    <location>
        <position position="141"/>
    </location>
    <ligand>
        <name>NAD(+)</name>
        <dbReference type="ChEBI" id="CHEBI:57540"/>
    </ligand>
</feature>
<feature type="binding site" evidence="1">
    <location>
        <position position="150"/>
    </location>
    <ligand>
        <name>NAD(+)</name>
        <dbReference type="ChEBI" id="CHEBI:57540"/>
    </ligand>
</feature>
<feature type="binding site" evidence="1">
    <location>
        <begin position="168"/>
        <end position="171"/>
    </location>
    <ligand>
        <name>NAD(+)</name>
        <dbReference type="ChEBI" id="CHEBI:57540"/>
    </ligand>
</feature>
<feature type="binding site" evidence="1">
    <location>
        <position position="183"/>
    </location>
    <ligand>
        <name>Zn(2+)</name>
        <dbReference type="ChEBI" id="CHEBI:29105"/>
    </ligand>
</feature>
<feature type="binding site" evidence="1">
    <location>
        <position position="246"/>
    </location>
    <ligand>
        <name>Zn(2+)</name>
        <dbReference type="ChEBI" id="CHEBI:29105"/>
    </ligand>
</feature>
<feature type="binding site" evidence="1">
    <location>
        <position position="263"/>
    </location>
    <ligand>
        <name>Zn(2+)</name>
        <dbReference type="ChEBI" id="CHEBI:29105"/>
    </ligand>
</feature>